<dbReference type="EC" id="5.3.1.24" evidence="1"/>
<dbReference type="EMBL" id="AM236080">
    <property type="protein sequence ID" value="CAK05508.1"/>
    <property type="molecule type" value="Genomic_DNA"/>
</dbReference>
<dbReference type="RefSeq" id="WP_011649850.1">
    <property type="nucleotide sequence ID" value="NC_008380.1"/>
</dbReference>
<dbReference type="SMR" id="Q1MND7"/>
<dbReference type="EnsemblBacteria" id="CAK05508">
    <property type="protein sequence ID" value="CAK05508"/>
    <property type="gene ID" value="RL0020"/>
</dbReference>
<dbReference type="KEGG" id="rle:RL0020"/>
<dbReference type="eggNOG" id="COG0135">
    <property type="taxonomic scope" value="Bacteria"/>
</dbReference>
<dbReference type="HOGENOM" id="CLU_076364_1_1_5"/>
<dbReference type="UniPathway" id="UPA00035">
    <property type="reaction ID" value="UER00042"/>
</dbReference>
<dbReference type="Proteomes" id="UP000006575">
    <property type="component" value="Chromosome"/>
</dbReference>
<dbReference type="GO" id="GO:0004640">
    <property type="term" value="F:phosphoribosylanthranilate isomerase activity"/>
    <property type="evidence" value="ECO:0007669"/>
    <property type="project" value="UniProtKB-UniRule"/>
</dbReference>
<dbReference type="GO" id="GO:0000162">
    <property type="term" value="P:L-tryptophan biosynthetic process"/>
    <property type="evidence" value="ECO:0007669"/>
    <property type="project" value="UniProtKB-UniRule"/>
</dbReference>
<dbReference type="CDD" id="cd00405">
    <property type="entry name" value="PRAI"/>
    <property type="match status" value="1"/>
</dbReference>
<dbReference type="Gene3D" id="3.20.20.70">
    <property type="entry name" value="Aldolase class I"/>
    <property type="match status" value="1"/>
</dbReference>
<dbReference type="HAMAP" id="MF_00135">
    <property type="entry name" value="PRAI"/>
    <property type="match status" value="1"/>
</dbReference>
<dbReference type="InterPro" id="IPR013785">
    <property type="entry name" value="Aldolase_TIM"/>
</dbReference>
<dbReference type="InterPro" id="IPR001240">
    <property type="entry name" value="PRAI_dom"/>
</dbReference>
<dbReference type="InterPro" id="IPR011060">
    <property type="entry name" value="RibuloseP-bd_barrel"/>
</dbReference>
<dbReference type="InterPro" id="IPR044643">
    <property type="entry name" value="TrpF_fam"/>
</dbReference>
<dbReference type="NCBIfam" id="NF002295">
    <property type="entry name" value="PRK01222.1-1"/>
    <property type="match status" value="1"/>
</dbReference>
<dbReference type="PANTHER" id="PTHR42894">
    <property type="entry name" value="N-(5'-PHOSPHORIBOSYL)ANTHRANILATE ISOMERASE"/>
    <property type="match status" value="1"/>
</dbReference>
<dbReference type="PANTHER" id="PTHR42894:SF1">
    <property type="entry name" value="N-(5'-PHOSPHORIBOSYL)ANTHRANILATE ISOMERASE"/>
    <property type="match status" value="1"/>
</dbReference>
<dbReference type="Pfam" id="PF00697">
    <property type="entry name" value="PRAI"/>
    <property type="match status" value="1"/>
</dbReference>
<dbReference type="SUPFAM" id="SSF51366">
    <property type="entry name" value="Ribulose-phoshate binding barrel"/>
    <property type="match status" value="1"/>
</dbReference>
<sequence>MRPDIKICGLKTPEAVDRALKRGATHIGFIFFEKSPRYIEPDLAAKLAEPARGKAKIVAVVVDPTNDELDEIVSLLKPDMLQLHGNESPEHVLTIKALYGLPVMKVFSVRTADDLKRVEAYIGIADRFLFDAKAPKGSELPGGNGISFDWSLLSWLDGSVDYMLSGGLNKDNVAEALFVTKAPGIDVSSGVETAPGVKSVAKIDEFFDAVEKANAPMMASGS</sequence>
<name>TRPF_RHIJ3</name>
<protein>
    <recommendedName>
        <fullName evidence="1">N-(5'-phosphoribosyl)anthranilate isomerase</fullName>
        <shortName evidence="1">PRAI</shortName>
        <ecNumber evidence="1">5.3.1.24</ecNumber>
    </recommendedName>
</protein>
<keyword id="KW-0028">Amino-acid biosynthesis</keyword>
<keyword id="KW-0057">Aromatic amino acid biosynthesis</keyword>
<keyword id="KW-0413">Isomerase</keyword>
<keyword id="KW-0822">Tryptophan biosynthesis</keyword>
<reference key="1">
    <citation type="journal article" date="2006" name="Genome Biol.">
        <title>The genome of Rhizobium leguminosarum has recognizable core and accessory components.</title>
        <authorList>
            <person name="Young J.P.W."/>
            <person name="Crossman L.C."/>
            <person name="Johnston A.W.B."/>
            <person name="Thomson N.R."/>
            <person name="Ghazoui Z.F."/>
            <person name="Hull K.H."/>
            <person name="Wexler M."/>
            <person name="Curson A.R.J."/>
            <person name="Todd J.D."/>
            <person name="Poole P.S."/>
            <person name="Mauchline T.H."/>
            <person name="East A.K."/>
            <person name="Quail M.A."/>
            <person name="Churcher C."/>
            <person name="Arrowsmith C."/>
            <person name="Cherevach I."/>
            <person name="Chillingworth T."/>
            <person name="Clarke K."/>
            <person name="Cronin A."/>
            <person name="Davis P."/>
            <person name="Fraser A."/>
            <person name="Hance Z."/>
            <person name="Hauser H."/>
            <person name="Jagels K."/>
            <person name="Moule S."/>
            <person name="Mungall K."/>
            <person name="Norbertczak H."/>
            <person name="Rabbinowitsch E."/>
            <person name="Sanders M."/>
            <person name="Simmonds M."/>
            <person name="Whitehead S."/>
            <person name="Parkhill J."/>
        </authorList>
    </citation>
    <scope>NUCLEOTIDE SEQUENCE [LARGE SCALE GENOMIC DNA]</scope>
    <source>
        <strain>DSM 114642 / LMG 32736 / 3841</strain>
    </source>
</reference>
<proteinExistence type="inferred from homology"/>
<organism>
    <name type="scientific">Rhizobium johnstonii (strain DSM 114642 / LMG 32736 / 3841)</name>
    <name type="common">Rhizobium leguminosarum bv. viciae</name>
    <dbReference type="NCBI Taxonomy" id="216596"/>
    <lineage>
        <taxon>Bacteria</taxon>
        <taxon>Pseudomonadati</taxon>
        <taxon>Pseudomonadota</taxon>
        <taxon>Alphaproteobacteria</taxon>
        <taxon>Hyphomicrobiales</taxon>
        <taxon>Rhizobiaceae</taxon>
        <taxon>Rhizobium/Agrobacterium group</taxon>
        <taxon>Rhizobium</taxon>
        <taxon>Rhizobium johnstonii</taxon>
    </lineage>
</organism>
<evidence type="ECO:0000255" key="1">
    <source>
        <dbReference type="HAMAP-Rule" id="MF_00135"/>
    </source>
</evidence>
<feature type="chain" id="PRO_1000018630" description="N-(5'-phosphoribosyl)anthranilate isomerase">
    <location>
        <begin position="1"/>
        <end position="222"/>
    </location>
</feature>
<gene>
    <name evidence="1" type="primary">trpF</name>
    <name type="ordered locus">RL0020</name>
</gene>
<accession>Q1MND7</accession>
<comment type="catalytic activity">
    <reaction evidence="1">
        <text>N-(5-phospho-beta-D-ribosyl)anthranilate = 1-(2-carboxyphenylamino)-1-deoxy-D-ribulose 5-phosphate</text>
        <dbReference type="Rhea" id="RHEA:21540"/>
        <dbReference type="ChEBI" id="CHEBI:18277"/>
        <dbReference type="ChEBI" id="CHEBI:58613"/>
        <dbReference type="EC" id="5.3.1.24"/>
    </reaction>
</comment>
<comment type="pathway">
    <text evidence="1">Amino-acid biosynthesis; L-tryptophan biosynthesis; L-tryptophan from chorismate: step 3/5.</text>
</comment>
<comment type="similarity">
    <text evidence="1">Belongs to the TrpF family.</text>
</comment>